<accession>A7ZY37</accession>
<gene>
    <name evidence="1" type="primary">moaA</name>
    <name type="ordered locus">EcHS_A0835</name>
</gene>
<proteinExistence type="inferred from homology"/>
<sequence>MASQLTDAFARKFYYLRLSITDVCNFRCTYCLPDGYKPSGVTNKGFLTVDEIRRVTRAFASLGTEKVRLTGGEPSLRRDFTDIIAAVRENDAIRQIAVTTNGYRLERDVANWRDAGLTGINVSVDSLDARQFHAITGQDKFNQVMAGIDAAFEAGFEKVKVNTVLMRDVNHHQLDTFLNWIQHRPIQLRFIELMETGEGSELFRKHHISGQVLRDELLRRGWIHQLRQRSDGPAQVFCHPDYAGEIGLIMPYEKDFCATCNRLRVSSIGKLHLCLFGEGGVNLRDLLEDDAQQQALEARISAALREKKQTHFLHQNNTGITQNLSYIGG</sequence>
<comment type="function">
    <text evidence="1">Catalyzes the cyclization of GTP to (8S)-3',8-cyclo-7,8-dihydroguanosine 5'-triphosphate.</text>
</comment>
<comment type="catalytic activity">
    <reaction evidence="1">
        <text>GTP + AH2 + S-adenosyl-L-methionine = (8S)-3',8-cyclo-7,8-dihydroguanosine 5'-triphosphate + 5'-deoxyadenosine + L-methionine + A + H(+)</text>
        <dbReference type="Rhea" id="RHEA:49576"/>
        <dbReference type="ChEBI" id="CHEBI:13193"/>
        <dbReference type="ChEBI" id="CHEBI:15378"/>
        <dbReference type="ChEBI" id="CHEBI:17319"/>
        <dbReference type="ChEBI" id="CHEBI:17499"/>
        <dbReference type="ChEBI" id="CHEBI:37565"/>
        <dbReference type="ChEBI" id="CHEBI:57844"/>
        <dbReference type="ChEBI" id="CHEBI:59789"/>
        <dbReference type="ChEBI" id="CHEBI:131766"/>
        <dbReference type="EC" id="4.1.99.22"/>
    </reaction>
</comment>
<comment type="cofactor">
    <cofactor evidence="1">
        <name>[4Fe-4S] cluster</name>
        <dbReference type="ChEBI" id="CHEBI:49883"/>
    </cofactor>
    <text evidence="1">Binds 2 [4Fe-4S] clusters. Binds 1 [4Fe-4S] cluster coordinated with 3 cysteines and an exchangeable S-adenosyl-L-methionine and 1 [4Fe-4S] cluster coordinated with 3 cysteines and the GTP-derived substrate.</text>
</comment>
<comment type="pathway">
    <text evidence="1">Cofactor biosynthesis; molybdopterin biosynthesis.</text>
</comment>
<comment type="subunit">
    <text evidence="1">Monomer and homodimer.</text>
</comment>
<comment type="similarity">
    <text evidence="1">Belongs to the radical SAM superfamily. MoaA family.</text>
</comment>
<organism>
    <name type="scientific">Escherichia coli O9:H4 (strain HS)</name>
    <dbReference type="NCBI Taxonomy" id="331112"/>
    <lineage>
        <taxon>Bacteria</taxon>
        <taxon>Pseudomonadati</taxon>
        <taxon>Pseudomonadota</taxon>
        <taxon>Gammaproteobacteria</taxon>
        <taxon>Enterobacterales</taxon>
        <taxon>Enterobacteriaceae</taxon>
        <taxon>Escherichia</taxon>
    </lineage>
</organism>
<reference key="1">
    <citation type="journal article" date="2008" name="J. Bacteriol.">
        <title>The pangenome structure of Escherichia coli: comparative genomic analysis of E. coli commensal and pathogenic isolates.</title>
        <authorList>
            <person name="Rasko D.A."/>
            <person name="Rosovitz M.J."/>
            <person name="Myers G.S.A."/>
            <person name="Mongodin E.F."/>
            <person name="Fricke W.F."/>
            <person name="Gajer P."/>
            <person name="Crabtree J."/>
            <person name="Sebaihia M."/>
            <person name="Thomson N.R."/>
            <person name="Chaudhuri R."/>
            <person name="Henderson I.R."/>
            <person name="Sperandio V."/>
            <person name="Ravel J."/>
        </authorList>
    </citation>
    <scope>NUCLEOTIDE SEQUENCE [LARGE SCALE GENOMIC DNA]</scope>
    <source>
        <strain>HS</strain>
    </source>
</reference>
<protein>
    <recommendedName>
        <fullName evidence="1">GTP 3',8-cyclase</fullName>
        <ecNumber evidence="1">4.1.99.22</ecNumber>
    </recommendedName>
    <alternativeName>
        <fullName evidence="1">Molybdenum cofactor biosynthesis protein A</fullName>
    </alternativeName>
</protein>
<dbReference type="EC" id="4.1.99.22" evidence="1"/>
<dbReference type="EMBL" id="CP000802">
    <property type="protein sequence ID" value="ABV05191.1"/>
    <property type="molecule type" value="Genomic_DNA"/>
</dbReference>
<dbReference type="RefSeq" id="WP_001408763.1">
    <property type="nucleotide sequence ID" value="NC_009800.1"/>
</dbReference>
<dbReference type="SMR" id="A7ZY37"/>
<dbReference type="KEGG" id="ecx:EcHS_A0835"/>
<dbReference type="HOGENOM" id="CLU_009273_0_1_6"/>
<dbReference type="UniPathway" id="UPA00344"/>
<dbReference type="GO" id="GO:0051539">
    <property type="term" value="F:4 iron, 4 sulfur cluster binding"/>
    <property type="evidence" value="ECO:0007669"/>
    <property type="project" value="UniProtKB-UniRule"/>
</dbReference>
<dbReference type="GO" id="GO:0061799">
    <property type="term" value="F:cyclic pyranopterin monophosphate synthase activity"/>
    <property type="evidence" value="ECO:0007669"/>
    <property type="project" value="TreeGrafter"/>
</dbReference>
<dbReference type="GO" id="GO:0061798">
    <property type="term" value="F:GTP 3',8'-cyclase activity"/>
    <property type="evidence" value="ECO:0007669"/>
    <property type="project" value="UniProtKB-UniRule"/>
</dbReference>
<dbReference type="GO" id="GO:0005525">
    <property type="term" value="F:GTP binding"/>
    <property type="evidence" value="ECO:0007669"/>
    <property type="project" value="UniProtKB-UniRule"/>
</dbReference>
<dbReference type="GO" id="GO:0046872">
    <property type="term" value="F:metal ion binding"/>
    <property type="evidence" value="ECO:0007669"/>
    <property type="project" value="UniProtKB-KW"/>
</dbReference>
<dbReference type="GO" id="GO:1904047">
    <property type="term" value="F:S-adenosyl-L-methionine binding"/>
    <property type="evidence" value="ECO:0007669"/>
    <property type="project" value="UniProtKB-UniRule"/>
</dbReference>
<dbReference type="GO" id="GO:0006777">
    <property type="term" value="P:Mo-molybdopterin cofactor biosynthetic process"/>
    <property type="evidence" value="ECO:0007669"/>
    <property type="project" value="UniProtKB-UniRule"/>
</dbReference>
<dbReference type="CDD" id="cd01335">
    <property type="entry name" value="Radical_SAM"/>
    <property type="match status" value="1"/>
</dbReference>
<dbReference type="CDD" id="cd21117">
    <property type="entry name" value="Twitch_MoaA"/>
    <property type="match status" value="1"/>
</dbReference>
<dbReference type="FunFam" id="3.20.20.70:FF:000057">
    <property type="entry name" value="GTP 3',8-cyclase"/>
    <property type="match status" value="1"/>
</dbReference>
<dbReference type="Gene3D" id="3.20.20.70">
    <property type="entry name" value="Aldolase class I"/>
    <property type="match status" value="1"/>
</dbReference>
<dbReference type="HAMAP" id="MF_01225_B">
    <property type="entry name" value="MoaA_B"/>
    <property type="match status" value="1"/>
</dbReference>
<dbReference type="InterPro" id="IPR013785">
    <property type="entry name" value="Aldolase_TIM"/>
</dbReference>
<dbReference type="InterPro" id="IPR006638">
    <property type="entry name" value="Elp3/MiaA/NifB-like_rSAM"/>
</dbReference>
<dbReference type="InterPro" id="IPR013483">
    <property type="entry name" value="MoaA"/>
</dbReference>
<dbReference type="InterPro" id="IPR000385">
    <property type="entry name" value="MoaA_NifB_PqqE_Fe-S-bd_CS"/>
</dbReference>
<dbReference type="InterPro" id="IPR010505">
    <property type="entry name" value="MoaA_twitch"/>
</dbReference>
<dbReference type="InterPro" id="IPR050105">
    <property type="entry name" value="MoCo_biosynth_MoaA/MoaC"/>
</dbReference>
<dbReference type="InterPro" id="IPR007197">
    <property type="entry name" value="rSAM"/>
</dbReference>
<dbReference type="NCBIfam" id="TIGR02666">
    <property type="entry name" value="moaA"/>
    <property type="match status" value="1"/>
</dbReference>
<dbReference type="PANTHER" id="PTHR22960:SF28">
    <property type="entry name" value="GTP 3',8-CYCLASE"/>
    <property type="match status" value="1"/>
</dbReference>
<dbReference type="PANTHER" id="PTHR22960">
    <property type="entry name" value="MOLYBDOPTERIN COFACTOR SYNTHESIS PROTEIN A"/>
    <property type="match status" value="1"/>
</dbReference>
<dbReference type="Pfam" id="PF13353">
    <property type="entry name" value="Fer4_12"/>
    <property type="match status" value="1"/>
</dbReference>
<dbReference type="Pfam" id="PF06463">
    <property type="entry name" value="Mob_synth_C"/>
    <property type="match status" value="1"/>
</dbReference>
<dbReference type="Pfam" id="PF04055">
    <property type="entry name" value="Radical_SAM"/>
    <property type="match status" value="1"/>
</dbReference>
<dbReference type="SFLD" id="SFLDG01383">
    <property type="entry name" value="cyclic_pyranopterin_phosphate"/>
    <property type="match status" value="1"/>
</dbReference>
<dbReference type="SFLD" id="SFLDG01216">
    <property type="entry name" value="thioether_bond_formation_requi"/>
    <property type="match status" value="1"/>
</dbReference>
<dbReference type="SMART" id="SM00729">
    <property type="entry name" value="Elp3"/>
    <property type="match status" value="1"/>
</dbReference>
<dbReference type="SUPFAM" id="SSF102114">
    <property type="entry name" value="Radical SAM enzymes"/>
    <property type="match status" value="1"/>
</dbReference>
<dbReference type="PROSITE" id="PS01305">
    <property type="entry name" value="MOAA_NIFB_PQQE"/>
    <property type="match status" value="1"/>
</dbReference>
<dbReference type="PROSITE" id="PS51918">
    <property type="entry name" value="RADICAL_SAM"/>
    <property type="match status" value="1"/>
</dbReference>
<evidence type="ECO:0000255" key="1">
    <source>
        <dbReference type="HAMAP-Rule" id="MF_01225"/>
    </source>
</evidence>
<evidence type="ECO:0000255" key="2">
    <source>
        <dbReference type="PROSITE-ProRule" id="PRU01266"/>
    </source>
</evidence>
<keyword id="KW-0004">4Fe-4S</keyword>
<keyword id="KW-0342">GTP-binding</keyword>
<keyword id="KW-0408">Iron</keyword>
<keyword id="KW-0411">Iron-sulfur</keyword>
<keyword id="KW-0456">Lyase</keyword>
<keyword id="KW-0479">Metal-binding</keyword>
<keyword id="KW-0501">Molybdenum cofactor biosynthesis</keyword>
<keyword id="KW-0547">Nucleotide-binding</keyword>
<keyword id="KW-0949">S-adenosyl-L-methionine</keyword>
<feature type="chain" id="PRO_1000066809" description="GTP 3',8-cyclase">
    <location>
        <begin position="1"/>
        <end position="329"/>
    </location>
</feature>
<feature type="domain" description="Radical SAM core" evidence="2">
    <location>
        <begin position="8"/>
        <end position="234"/>
    </location>
</feature>
<feature type="binding site" evidence="1">
    <location>
        <position position="17"/>
    </location>
    <ligand>
        <name>GTP</name>
        <dbReference type="ChEBI" id="CHEBI:37565"/>
    </ligand>
</feature>
<feature type="binding site" evidence="1">
    <location>
        <position position="24"/>
    </location>
    <ligand>
        <name>[4Fe-4S] cluster</name>
        <dbReference type="ChEBI" id="CHEBI:49883"/>
        <label>1</label>
        <note>4Fe-4S-S-AdoMet</note>
    </ligand>
</feature>
<feature type="binding site" evidence="1">
    <location>
        <position position="28"/>
    </location>
    <ligand>
        <name>[4Fe-4S] cluster</name>
        <dbReference type="ChEBI" id="CHEBI:49883"/>
        <label>1</label>
        <note>4Fe-4S-S-AdoMet</note>
    </ligand>
</feature>
<feature type="binding site" evidence="1">
    <location>
        <position position="30"/>
    </location>
    <ligand>
        <name>S-adenosyl-L-methionine</name>
        <dbReference type="ChEBI" id="CHEBI:59789"/>
    </ligand>
</feature>
<feature type="binding site" evidence="1">
    <location>
        <position position="31"/>
    </location>
    <ligand>
        <name>[4Fe-4S] cluster</name>
        <dbReference type="ChEBI" id="CHEBI:49883"/>
        <label>1</label>
        <note>4Fe-4S-S-AdoMet</note>
    </ligand>
</feature>
<feature type="binding site" evidence="1">
    <location>
        <position position="68"/>
    </location>
    <ligand>
        <name>GTP</name>
        <dbReference type="ChEBI" id="CHEBI:37565"/>
    </ligand>
</feature>
<feature type="binding site" evidence="1">
    <location>
        <position position="72"/>
    </location>
    <ligand>
        <name>S-adenosyl-L-methionine</name>
        <dbReference type="ChEBI" id="CHEBI:59789"/>
    </ligand>
</feature>
<feature type="binding site" evidence="1">
    <location>
        <position position="99"/>
    </location>
    <ligand>
        <name>GTP</name>
        <dbReference type="ChEBI" id="CHEBI:37565"/>
    </ligand>
</feature>
<feature type="binding site" evidence="1">
    <location>
        <position position="123"/>
    </location>
    <ligand>
        <name>S-adenosyl-L-methionine</name>
        <dbReference type="ChEBI" id="CHEBI:59789"/>
    </ligand>
</feature>
<feature type="binding site" evidence="1">
    <location>
        <position position="160"/>
    </location>
    <ligand>
        <name>GTP</name>
        <dbReference type="ChEBI" id="CHEBI:37565"/>
    </ligand>
</feature>
<feature type="binding site" evidence="1">
    <location>
        <position position="194"/>
    </location>
    <ligand>
        <name>S-adenosyl-L-methionine</name>
        <dbReference type="ChEBI" id="CHEBI:59789"/>
    </ligand>
</feature>
<feature type="binding site" evidence="1">
    <location>
        <position position="257"/>
    </location>
    <ligand>
        <name>[4Fe-4S] cluster</name>
        <dbReference type="ChEBI" id="CHEBI:49883"/>
        <label>2</label>
        <note>4Fe-4S-substrate</note>
    </ligand>
</feature>
<feature type="binding site" evidence="1">
    <location>
        <position position="260"/>
    </location>
    <ligand>
        <name>[4Fe-4S] cluster</name>
        <dbReference type="ChEBI" id="CHEBI:49883"/>
        <label>2</label>
        <note>4Fe-4S-substrate</note>
    </ligand>
</feature>
<feature type="binding site" evidence="1">
    <location>
        <begin position="262"/>
        <end position="264"/>
    </location>
    <ligand>
        <name>GTP</name>
        <dbReference type="ChEBI" id="CHEBI:37565"/>
    </ligand>
</feature>
<feature type="binding site" evidence="1">
    <location>
        <position position="274"/>
    </location>
    <ligand>
        <name>[4Fe-4S] cluster</name>
        <dbReference type="ChEBI" id="CHEBI:49883"/>
        <label>2</label>
        <note>4Fe-4S-substrate</note>
    </ligand>
</feature>
<name>MOAA_ECOHS</name>